<feature type="chain" id="PRO_1000058589" description="UDP-N-acetylmuramoyl-L-alanyl-D-glutamate--2,6-diaminopimelate ligase">
    <location>
        <begin position="1"/>
        <end position="520"/>
    </location>
</feature>
<feature type="short sequence motif" description="Meso-diaminopimelate recognition motif">
    <location>
        <begin position="429"/>
        <end position="432"/>
    </location>
</feature>
<feature type="binding site" evidence="1">
    <location>
        <position position="48"/>
    </location>
    <ligand>
        <name>UDP-N-acetyl-alpha-D-muramoyl-L-alanyl-D-glutamate</name>
        <dbReference type="ChEBI" id="CHEBI:83900"/>
    </ligand>
</feature>
<feature type="binding site" evidence="1">
    <location>
        <begin position="134"/>
        <end position="140"/>
    </location>
    <ligand>
        <name>ATP</name>
        <dbReference type="ChEBI" id="CHEBI:30616"/>
    </ligand>
</feature>
<feature type="binding site" evidence="1">
    <location>
        <begin position="176"/>
        <end position="177"/>
    </location>
    <ligand>
        <name>UDP-N-acetyl-alpha-D-muramoyl-L-alanyl-D-glutamate</name>
        <dbReference type="ChEBI" id="CHEBI:83900"/>
    </ligand>
</feature>
<feature type="binding site" evidence="1">
    <location>
        <position position="203"/>
    </location>
    <ligand>
        <name>UDP-N-acetyl-alpha-D-muramoyl-L-alanyl-D-glutamate</name>
        <dbReference type="ChEBI" id="CHEBI:83900"/>
    </ligand>
</feature>
<feature type="binding site" evidence="1">
    <location>
        <position position="211"/>
    </location>
    <ligand>
        <name>UDP-N-acetyl-alpha-D-muramoyl-L-alanyl-D-glutamate</name>
        <dbReference type="ChEBI" id="CHEBI:83900"/>
    </ligand>
</feature>
<feature type="binding site" evidence="1">
    <location>
        <position position="405"/>
    </location>
    <ligand>
        <name>meso-2,6-diaminopimelate</name>
        <dbReference type="ChEBI" id="CHEBI:57791"/>
    </ligand>
</feature>
<feature type="binding site" evidence="1">
    <location>
        <begin position="429"/>
        <end position="432"/>
    </location>
    <ligand>
        <name>meso-2,6-diaminopimelate</name>
        <dbReference type="ChEBI" id="CHEBI:57791"/>
    </ligand>
</feature>
<feature type="binding site" evidence="1">
    <location>
        <position position="483"/>
    </location>
    <ligand>
        <name>meso-2,6-diaminopimelate</name>
        <dbReference type="ChEBI" id="CHEBI:57791"/>
    </ligand>
</feature>
<feature type="binding site" evidence="1">
    <location>
        <position position="487"/>
    </location>
    <ligand>
        <name>meso-2,6-diaminopimelate</name>
        <dbReference type="ChEBI" id="CHEBI:57791"/>
    </ligand>
</feature>
<feature type="modified residue" description="N6-carboxylysine" evidence="1">
    <location>
        <position position="243"/>
    </location>
</feature>
<protein>
    <recommendedName>
        <fullName evidence="1">UDP-N-acetylmuramoyl-L-alanyl-D-glutamate--2,6-diaminopimelate ligase</fullName>
        <ecNumber evidence="1">6.3.2.13</ecNumber>
    </recommendedName>
    <alternativeName>
        <fullName evidence="1">Meso-A2pm-adding enzyme</fullName>
    </alternativeName>
    <alternativeName>
        <fullName evidence="1">Meso-diaminopimelate-adding enzyme</fullName>
    </alternativeName>
    <alternativeName>
        <fullName evidence="1">UDP-MurNAc-L-Ala-D-Glu:meso-diaminopimelate ligase</fullName>
    </alternativeName>
    <alternativeName>
        <fullName evidence="1">UDP-MurNAc-tripeptide synthetase</fullName>
    </alternativeName>
    <alternativeName>
        <fullName evidence="1">UDP-N-acetylmuramyl-tripeptide synthetase</fullName>
    </alternativeName>
</protein>
<dbReference type="EC" id="6.3.2.13" evidence="1"/>
<dbReference type="EMBL" id="CP000479">
    <property type="protein sequence ID" value="ABK64811.1"/>
    <property type="molecule type" value="Genomic_DNA"/>
</dbReference>
<dbReference type="RefSeq" id="WP_009976555.1">
    <property type="nucleotide sequence ID" value="NC_008595.1"/>
</dbReference>
<dbReference type="SMR" id="A0QF47"/>
<dbReference type="KEGG" id="mav:MAV_2331"/>
<dbReference type="HOGENOM" id="CLU_022291_4_1_11"/>
<dbReference type="UniPathway" id="UPA00219"/>
<dbReference type="Proteomes" id="UP000001574">
    <property type="component" value="Chromosome"/>
</dbReference>
<dbReference type="GO" id="GO:0005737">
    <property type="term" value="C:cytoplasm"/>
    <property type="evidence" value="ECO:0007669"/>
    <property type="project" value="UniProtKB-SubCell"/>
</dbReference>
<dbReference type="GO" id="GO:0005524">
    <property type="term" value="F:ATP binding"/>
    <property type="evidence" value="ECO:0007669"/>
    <property type="project" value="UniProtKB-UniRule"/>
</dbReference>
<dbReference type="GO" id="GO:0000287">
    <property type="term" value="F:magnesium ion binding"/>
    <property type="evidence" value="ECO:0007669"/>
    <property type="project" value="UniProtKB-UniRule"/>
</dbReference>
<dbReference type="GO" id="GO:0008765">
    <property type="term" value="F:UDP-N-acetylmuramoylalanyl-D-glutamate-2,6-diaminopimelate ligase activity"/>
    <property type="evidence" value="ECO:0007669"/>
    <property type="project" value="UniProtKB-UniRule"/>
</dbReference>
<dbReference type="GO" id="GO:0051301">
    <property type="term" value="P:cell division"/>
    <property type="evidence" value="ECO:0007669"/>
    <property type="project" value="UniProtKB-KW"/>
</dbReference>
<dbReference type="GO" id="GO:0071555">
    <property type="term" value="P:cell wall organization"/>
    <property type="evidence" value="ECO:0007669"/>
    <property type="project" value="UniProtKB-KW"/>
</dbReference>
<dbReference type="GO" id="GO:0009252">
    <property type="term" value="P:peptidoglycan biosynthetic process"/>
    <property type="evidence" value="ECO:0007669"/>
    <property type="project" value="UniProtKB-UniRule"/>
</dbReference>
<dbReference type="GO" id="GO:0008360">
    <property type="term" value="P:regulation of cell shape"/>
    <property type="evidence" value="ECO:0007669"/>
    <property type="project" value="UniProtKB-KW"/>
</dbReference>
<dbReference type="Gene3D" id="3.90.190.20">
    <property type="entry name" value="Mur ligase, C-terminal domain"/>
    <property type="match status" value="1"/>
</dbReference>
<dbReference type="Gene3D" id="3.40.1190.10">
    <property type="entry name" value="Mur-like, catalytic domain"/>
    <property type="match status" value="1"/>
</dbReference>
<dbReference type="Gene3D" id="3.40.1390.10">
    <property type="entry name" value="MurE/MurF, N-terminal domain"/>
    <property type="match status" value="1"/>
</dbReference>
<dbReference type="HAMAP" id="MF_00208">
    <property type="entry name" value="MurE"/>
    <property type="match status" value="1"/>
</dbReference>
<dbReference type="InterPro" id="IPR036565">
    <property type="entry name" value="Mur-like_cat_sf"/>
</dbReference>
<dbReference type="InterPro" id="IPR004101">
    <property type="entry name" value="Mur_ligase_C"/>
</dbReference>
<dbReference type="InterPro" id="IPR036615">
    <property type="entry name" value="Mur_ligase_C_dom_sf"/>
</dbReference>
<dbReference type="InterPro" id="IPR013221">
    <property type="entry name" value="Mur_ligase_cen"/>
</dbReference>
<dbReference type="InterPro" id="IPR000713">
    <property type="entry name" value="Mur_ligase_N"/>
</dbReference>
<dbReference type="InterPro" id="IPR035911">
    <property type="entry name" value="MurE/MurF_N"/>
</dbReference>
<dbReference type="InterPro" id="IPR005761">
    <property type="entry name" value="UDP-N-AcMur-Glu-dNH2Pim_ligase"/>
</dbReference>
<dbReference type="NCBIfam" id="TIGR01085">
    <property type="entry name" value="murE"/>
    <property type="match status" value="1"/>
</dbReference>
<dbReference type="NCBIfam" id="NF001124">
    <property type="entry name" value="PRK00139.1-2"/>
    <property type="match status" value="1"/>
</dbReference>
<dbReference type="NCBIfam" id="NF001126">
    <property type="entry name" value="PRK00139.1-4"/>
    <property type="match status" value="1"/>
</dbReference>
<dbReference type="PANTHER" id="PTHR23135">
    <property type="entry name" value="MUR LIGASE FAMILY MEMBER"/>
    <property type="match status" value="1"/>
</dbReference>
<dbReference type="PANTHER" id="PTHR23135:SF4">
    <property type="entry name" value="UDP-N-ACETYLMURAMOYL-L-ALANYL-D-GLUTAMATE--2,6-DIAMINOPIMELATE LIGASE MURE HOMOLOG, CHLOROPLASTIC"/>
    <property type="match status" value="1"/>
</dbReference>
<dbReference type="Pfam" id="PF01225">
    <property type="entry name" value="Mur_ligase"/>
    <property type="match status" value="1"/>
</dbReference>
<dbReference type="Pfam" id="PF02875">
    <property type="entry name" value="Mur_ligase_C"/>
    <property type="match status" value="1"/>
</dbReference>
<dbReference type="Pfam" id="PF08245">
    <property type="entry name" value="Mur_ligase_M"/>
    <property type="match status" value="1"/>
</dbReference>
<dbReference type="SUPFAM" id="SSF53623">
    <property type="entry name" value="MurD-like peptide ligases, catalytic domain"/>
    <property type="match status" value="1"/>
</dbReference>
<dbReference type="SUPFAM" id="SSF53244">
    <property type="entry name" value="MurD-like peptide ligases, peptide-binding domain"/>
    <property type="match status" value="1"/>
</dbReference>
<dbReference type="SUPFAM" id="SSF63418">
    <property type="entry name" value="MurE/MurF N-terminal domain"/>
    <property type="match status" value="1"/>
</dbReference>
<name>MURE_MYCA1</name>
<keyword id="KW-0067">ATP-binding</keyword>
<keyword id="KW-0131">Cell cycle</keyword>
<keyword id="KW-0132">Cell division</keyword>
<keyword id="KW-0133">Cell shape</keyword>
<keyword id="KW-0961">Cell wall biogenesis/degradation</keyword>
<keyword id="KW-0963">Cytoplasm</keyword>
<keyword id="KW-0436">Ligase</keyword>
<keyword id="KW-0460">Magnesium</keyword>
<keyword id="KW-0547">Nucleotide-binding</keyword>
<keyword id="KW-0573">Peptidoglycan synthesis</keyword>
<proteinExistence type="inferred from homology"/>
<accession>A0QF47</accession>
<sequence>MVSVPTGLRPSAVPGVRLPALADQVGAVMAGPDRRAAVPDVTVTGVTLRAQDVLPGDLFAALPGATTHGARHAAEAIERGAVAVLTDAAGVAQLTGGRTTPTLLHPRPRSVLGELAAAVYAHPSERLTVIGITGTSGKTTTTYLVESGLRAAGRTAGLIGTVGIRIDGADIPSALTTPEAPALQALLAAMAEQRVDTVVMEVSSHALALGRVDGTRFAVGGFTNLSRDHLDFHPTMADYFEAKALLFDPNSPLRAHRAVVCIDDEAGREMAARAGDAVTVSAEGQPAHWRAVEVAPLGTGGQQFTVIDPAGVQHRAGIRLPGHYNVANCLVALALLDAVGVSPEQAAPGLLQTRVPGRMEEIDAGQDFLALVDYAHKPGALRAVLSSLKRPDRRLAVVFGAGGERDPGKRAPMGATAAELADLVVVTDDNPRGEDPAAIRREILAGATESGCAAEVIEIGDRRAAIRHAVAWAGPGDVVLVAGKGHETGQRTGEHTRPFDDRVELAEALREAVGPRKAQG</sequence>
<gene>
    <name evidence="1" type="primary">murE</name>
    <name type="ordered locus">MAV_2331</name>
</gene>
<evidence type="ECO:0000255" key="1">
    <source>
        <dbReference type="HAMAP-Rule" id="MF_00208"/>
    </source>
</evidence>
<comment type="function">
    <text evidence="1">Catalyzes the addition of meso-diaminopimelic acid to the nucleotide precursor UDP-N-acetylmuramoyl-L-alanyl-D-glutamate (UMAG) in the biosynthesis of bacterial cell-wall peptidoglycan.</text>
</comment>
<comment type="catalytic activity">
    <reaction evidence="1">
        <text>UDP-N-acetyl-alpha-D-muramoyl-L-alanyl-D-glutamate + meso-2,6-diaminopimelate + ATP = UDP-N-acetyl-alpha-D-muramoyl-L-alanyl-gamma-D-glutamyl-meso-2,6-diaminopimelate + ADP + phosphate + H(+)</text>
        <dbReference type="Rhea" id="RHEA:23676"/>
        <dbReference type="ChEBI" id="CHEBI:15378"/>
        <dbReference type="ChEBI" id="CHEBI:30616"/>
        <dbReference type="ChEBI" id="CHEBI:43474"/>
        <dbReference type="ChEBI" id="CHEBI:57791"/>
        <dbReference type="ChEBI" id="CHEBI:83900"/>
        <dbReference type="ChEBI" id="CHEBI:83905"/>
        <dbReference type="ChEBI" id="CHEBI:456216"/>
        <dbReference type="EC" id="6.3.2.13"/>
    </reaction>
</comment>
<comment type="cofactor">
    <cofactor evidence="1">
        <name>Mg(2+)</name>
        <dbReference type="ChEBI" id="CHEBI:18420"/>
    </cofactor>
</comment>
<comment type="pathway">
    <text evidence="1">Cell wall biogenesis; peptidoglycan biosynthesis.</text>
</comment>
<comment type="subcellular location">
    <subcellularLocation>
        <location evidence="1">Cytoplasm</location>
    </subcellularLocation>
</comment>
<comment type="PTM">
    <text evidence="1">Carboxylation is probably crucial for Mg(2+) binding and, consequently, for the gamma-phosphate positioning of ATP.</text>
</comment>
<comment type="similarity">
    <text evidence="1">Belongs to the MurCDEF family. MurE subfamily.</text>
</comment>
<reference key="1">
    <citation type="submission" date="2006-10" db="EMBL/GenBank/DDBJ databases">
        <authorList>
            <person name="Fleischmann R.D."/>
            <person name="Dodson R.J."/>
            <person name="Haft D.H."/>
            <person name="Merkel J.S."/>
            <person name="Nelson W.C."/>
            <person name="Fraser C.M."/>
        </authorList>
    </citation>
    <scope>NUCLEOTIDE SEQUENCE [LARGE SCALE GENOMIC DNA]</scope>
    <source>
        <strain>104</strain>
    </source>
</reference>
<organism>
    <name type="scientific">Mycobacterium avium (strain 104)</name>
    <dbReference type="NCBI Taxonomy" id="243243"/>
    <lineage>
        <taxon>Bacteria</taxon>
        <taxon>Bacillati</taxon>
        <taxon>Actinomycetota</taxon>
        <taxon>Actinomycetes</taxon>
        <taxon>Mycobacteriales</taxon>
        <taxon>Mycobacteriaceae</taxon>
        <taxon>Mycobacterium</taxon>
        <taxon>Mycobacterium avium complex (MAC)</taxon>
    </lineage>
</organism>